<name>RL35_CLOBJ</name>
<reference key="1">
    <citation type="submission" date="2008-10" db="EMBL/GenBank/DDBJ databases">
        <title>Genome sequence of Clostridium botulinum A2 Kyoto.</title>
        <authorList>
            <person name="Shrivastava S."/>
            <person name="Brinkac L.M."/>
            <person name="Brown J.L."/>
            <person name="Bruce D."/>
            <person name="Detter C.C."/>
            <person name="Johnson E.A."/>
            <person name="Munk C.A."/>
            <person name="Smith L.A."/>
            <person name="Smith T.J."/>
            <person name="Sutton G."/>
            <person name="Brettin T.S."/>
        </authorList>
    </citation>
    <scope>NUCLEOTIDE SEQUENCE [LARGE SCALE GENOMIC DNA]</scope>
    <source>
        <strain>Kyoto / Type A2</strain>
    </source>
</reference>
<dbReference type="EMBL" id="CP001581">
    <property type="protein sequence ID" value="ACO87149.1"/>
    <property type="molecule type" value="Genomic_DNA"/>
</dbReference>
<dbReference type="RefSeq" id="WP_003357520.1">
    <property type="nucleotide sequence ID" value="NC_012563.1"/>
</dbReference>
<dbReference type="SMR" id="C1FKM8"/>
<dbReference type="GeneID" id="92939857"/>
<dbReference type="KEGG" id="cby:CLM_3543"/>
<dbReference type="eggNOG" id="COG0291">
    <property type="taxonomic scope" value="Bacteria"/>
</dbReference>
<dbReference type="HOGENOM" id="CLU_169643_1_1_9"/>
<dbReference type="Proteomes" id="UP000001374">
    <property type="component" value="Chromosome"/>
</dbReference>
<dbReference type="GO" id="GO:0022625">
    <property type="term" value="C:cytosolic large ribosomal subunit"/>
    <property type="evidence" value="ECO:0007669"/>
    <property type="project" value="TreeGrafter"/>
</dbReference>
<dbReference type="GO" id="GO:0003735">
    <property type="term" value="F:structural constituent of ribosome"/>
    <property type="evidence" value="ECO:0007669"/>
    <property type="project" value="InterPro"/>
</dbReference>
<dbReference type="GO" id="GO:0006412">
    <property type="term" value="P:translation"/>
    <property type="evidence" value="ECO:0007669"/>
    <property type="project" value="UniProtKB-UniRule"/>
</dbReference>
<dbReference type="FunFam" id="4.10.410.60:FF:000001">
    <property type="entry name" value="50S ribosomal protein L35"/>
    <property type="match status" value="1"/>
</dbReference>
<dbReference type="Gene3D" id="4.10.410.60">
    <property type="match status" value="1"/>
</dbReference>
<dbReference type="HAMAP" id="MF_00514">
    <property type="entry name" value="Ribosomal_bL35"/>
    <property type="match status" value="1"/>
</dbReference>
<dbReference type="InterPro" id="IPR001706">
    <property type="entry name" value="Ribosomal_bL35"/>
</dbReference>
<dbReference type="InterPro" id="IPR021137">
    <property type="entry name" value="Ribosomal_bL35-like"/>
</dbReference>
<dbReference type="InterPro" id="IPR018265">
    <property type="entry name" value="Ribosomal_bL35_CS"/>
</dbReference>
<dbReference type="InterPro" id="IPR037229">
    <property type="entry name" value="Ribosomal_bL35_sf"/>
</dbReference>
<dbReference type="NCBIfam" id="TIGR00001">
    <property type="entry name" value="rpmI_bact"/>
    <property type="match status" value="1"/>
</dbReference>
<dbReference type="PANTHER" id="PTHR33343">
    <property type="entry name" value="54S RIBOSOMAL PROTEIN BL35M"/>
    <property type="match status" value="1"/>
</dbReference>
<dbReference type="PANTHER" id="PTHR33343:SF1">
    <property type="entry name" value="LARGE RIBOSOMAL SUBUNIT PROTEIN BL35M"/>
    <property type="match status" value="1"/>
</dbReference>
<dbReference type="Pfam" id="PF01632">
    <property type="entry name" value="Ribosomal_L35p"/>
    <property type="match status" value="1"/>
</dbReference>
<dbReference type="PRINTS" id="PR00064">
    <property type="entry name" value="RIBOSOMALL35"/>
</dbReference>
<dbReference type="SUPFAM" id="SSF143034">
    <property type="entry name" value="L35p-like"/>
    <property type="match status" value="1"/>
</dbReference>
<dbReference type="PROSITE" id="PS00936">
    <property type="entry name" value="RIBOSOMAL_L35"/>
    <property type="match status" value="1"/>
</dbReference>
<evidence type="ECO:0000255" key="1">
    <source>
        <dbReference type="HAMAP-Rule" id="MF_00514"/>
    </source>
</evidence>
<evidence type="ECO:0000305" key="2"/>
<sequence>MPKMKTKRAAAKRFKVTGTGKLKRAKAFKSHILTKKSRKTKRNLRKAGYVSESQEKVMKKVLPYL</sequence>
<feature type="chain" id="PRO_1000146131" description="Large ribosomal subunit protein bL35">
    <location>
        <begin position="1"/>
        <end position="65"/>
    </location>
</feature>
<organism>
    <name type="scientific">Clostridium botulinum (strain Kyoto / Type A2)</name>
    <dbReference type="NCBI Taxonomy" id="536232"/>
    <lineage>
        <taxon>Bacteria</taxon>
        <taxon>Bacillati</taxon>
        <taxon>Bacillota</taxon>
        <taxon>Clostridia</taxon>
        <taxon>Eubacteriales</taxon>
        <taxon>Clostridiaceae</taxon>
        <taxon>Clostridium</taxon>
    </lineage>
</organism>
<protein>
    <recommendedName>
        <fullName evidence="1">Large ribosomal subunit protein bL35</fullName>
    </recommendedName>
    <alternativeName>
        <fullName evidence="2">50S ribosomal protein L35</fullName>
    </alternativeName>
</protein>
<proteinExistence type="inferred from homology"/>
<gene>
    <name evidence="1" type="primary">rpmI</name>
    <name type="ordered locus">CLM_3543</name>
</gene>
<accession>C1FKM8</accession>
<comment type="similarity">
    <text evidence="1">Belongs to the bacterial ribosomal protein bL35 family.</text>
</comment>
<keyword id="KW-0687">Ribonucleoprotein</keyword>
<keyword id="KW-0689">Ribosomal protein</keyword>